<organism>
    <name type="scientific">Verminephrobacter eiseniae (strain EF01-2)</name>
    <dbReference type="NCBI Taxonomy" id="391735"/>
    <lineage>
        <taxon>Bacteria</taxon>
        <taxon>Pseudomonadati</taxon>
        <taxon>Pseudomonadota</taxon>
        <taxon>Betaproteobacteria</taxon>
        <taxon>Burkholderiales</taxon>
        <taxon>Comamonadaceae</taxon>
        <taxon>Verminephrobacter</taxon>
    </lineage>
</organism>
<dbReference type="EC" id="7.1.2.2" evidence="1"/>
<dbReference type="EMBL" id="CP000542">
    <property type="protein sequence ID" value="ABM56265.1"/>
    <property type="molecule type" value="Genomic_DNA"/>
</dbReference>
<dbReference type="RefSeq" id="WP_011808281.1">
    <property type="nucleotide sequence ID" value="NC_008786.1"/>
</dbReference>
<dbReference type="SMR" id="A1WF58"/>
<dbReference type="STRING" id="391735.Veis_0480"/>
<dbReference type="GeneID" id="76459190"/>
<dbReference type="KEGG" id="vei:Veis_0480"/>
<dbReference type="eggNOG" id="COG0055">
    <property type="taxonomic scope" value="Bacteria"/>
</dbReference>
<dbReference type="HOGENOM" id="CLU_022398_0_2_4"/>
<dbReference type="OrthoDB" id="9801639at2"/>
<dbReference type="Proteomes" id="UP000000374">
    <property type="component" value="Chromosome"/>
</dbReference>
<dbReference type="GO" id="GO:0005886">
    <property type="term" value="C:plasma membrane"/>
    <property type="evidence" value="ECO:0007669"/>
    <property type="project" value="UniProtKB-SubCell"/>
</dbReference>
<dbReference type="GO" id="GO:0045259">
    <property type="term" value="C:proton-transporting ATP synthase complex"/>
    <property type="evidence" value="ECO:0007669"/>
    <property type="project" value="UniProtKB-KW"/>
</dbReference>
<dbReference type="GO" id="GO:0005524">
    <property type="term" value="F:ATP binding"/>
    <property type="evidence" value="ECO:0007669"/>
    <property type="project" value="UniProtKB-UniRule"/>
</dbReference>
<dbReference type="GO" id="GO:0016887">
    <property type="term" value="F:ATP hydrolysis activity"/>
    <property type="evidence" value="ECO:0007669"/>
    <property type="project" value="InterPro"/>
</dbReference>
<dbReference type="GO" id="GO:0046933">
    <property type="term" value="F:proton-transporting ATP synthase activity, rotational mechanism"/>
    <property type="evidence" value="ECO:0007669"/>
    <property type="project" value="UniProtKB-UniRule"/>
</dbReference>
<dbReference type="CDD" id="cd18110">
    <property type="entry name" value="ATP-synt_F1_beta_C"/>
    <property type="match status" value="1"/>
</dbReference>
<dbReference type="CDD" id="cd18115">
    <property type="entry name" value="ATP-synt_F1_beta_N"/>
    <property type="match status" value="1"/>
</dbReference>
<dbReference type="CDD" id="cd01133">
    <property type="entry name" value="F1-ATPase_beta_CD"/>
    <property type="match status" value="1"/>
</dbReference>
<dbReference type="FunFam" id="1.10.1140.10:FF:000001">
    <property type="entry name" value="ATP synthase subunit beta"/>
    <property type="match status" value="1"/>
</dbReference>
<dbReference type="FunFam" id="3.40.50.300:FF:000004">
    <property type="entry name" value="ATP synthase subunit beta"/>
    <property type="match status" value="1"/>
</dbReference>
<dbReference type="Gene3D" id="2.40.10.170">
    <property type="match status" value="1"/>
</dbReference>
<dbReference type="Gene3D" id="1.10.1140.10">
    <property type="entry name" value="Bovine Mitochondrial F1-atpase, Atp Synthase Beta Chain, Chain D, domain 3"/>
    <property type="match status" value="1"/>
</dbReference>
<dbReference type="Gene3D" id="3.40.50.300">
    <property type="entry name" value="P-loop containing nucleotide triphosphate hydrolases"/>
    <property type="match status" value="1"/>
</dbReference>
<dbReference type="HAMAP" id="MF_01347">
    <property type="entry name" value="ATP_synth_beta_bact"/>
    <property type="match status" value="1"/>
</dbReference>
<dbReference type="InterPro" id="IPR003593">
    <property type="entry name" value="AAA+_ATPase"/>
</dbReference>
<dbReference type="InterPro" id="IPR055190">
    <property type="entry name" value="ATP-synt_VA_C"/>
</dbReference>
<dbReference type="InterPro" id="IPR005722">
    <property type="entry name" value="ATP_synth_F1_bsu"/>
</dbReference>
<dbReference type="InterPro" id="IPR020003">
    <property type="entry name" value="ATPase_a/bsu_AS"/>
</dbReference>
<dbReference type="InterPro" id="IPR050053">
    <property type="entry name" value="ATPase_alpha/beta_chains"/>
</dbReference>
<dbReference type="InterPro" id="IPR004100">
    <property type="entry name" value="ATPase_F1/V1/A1_a/bsu_N"/>
</dbReference>
<dbReference type="InterPro" id="IPR036121">
    <property type="entry name" value="ATPase_F1/V1/A1_a/bsu_N_sf"/>
</dbReference>
<dbReference type="InterPro" id="IPR000194">
    <property type="entry name" value="ATPase_F1/V1/A1_a/bsu_nucl-bd"/>
</dbReference>
<dbReference type="InterPro" id="IPR024034">
    <property type="entry name" value="ATPase_F1/V1_b/a_C"/>
</dbReference>
<dbReference type="InterPro" id="IPR027417">
    <property type="entry name" value="P-loop_NTPase"/>
</dbReference>
<dbReference type="NCBIfam" id="TIGR01039">
    <property type="entry name" value="atpD"/>
    <property type="match status" value="1"/>
</dbReference>
<dbReference type="PANTHER" id="PTHR15184">
    <property type="entry name" value="ATP SYNTHASE"/>
    <property type="match status" value="1"/>
</dbReference>
<dbReference type="PANTHER" id="PTHR15184:SF71">
    <property type="entry name" value="ATP SYNTHASE SUBUNIT BETA, MITOCHONDRIAL"/>
    <property type="match status" value="1"/>
</dbReference>
<dbReference type="Pfam" id="PF00006">
    <property type="entry name" value="ATP-synt_ab"/>
    <property type="match status" value="1"/>
</dbReference>
<dbReference type="Pfam" id="PF02874">
    <property type="entry name" value="ATP-synt_ab_N"/>
    <property type="match status" value="1"/>
</dbReference>
<dbReference type="Pfam" id="PF22919">
    <property type="entry name" value="ATP-synt_VA_C"/>
    <property type="match status" value="1"/>
</dbReference>
<dbReference type="SMART" id="SM00382">
    <property type="entry name" value="AAA"/>
    <property type="match status" value="1"/>
</dbReference>
<dbReference type="SUPFAM" id="SSF47917">
    <property type="entry name" value="C-terminal domain of alpha and beta subunits of F1 ATP synthase"/>
    <property type="match status" value="1"/>
</dbReference>
<dbReference type="SUPFAM" id="SSF50615">
    <property type="entry name" value="N-terminal domain of alpha and beta subunits of F1 ATP synthase"/>
    <property type="match status" value="1"/>
</dbReference>
<dbReference type="SUPFAM" id="SSF52540">
    <property type="entry name" value="P-loop containing nucleoside triphosphate hydrolases"/>
    <property type="match status" value="1"/>
</dbReference>
<dbReference type="PROSITE" id="PS00152">
    <property type="entry name" value="ATPASE_ALPHA_BETA"/>
    <property type="match status" value="1"/>
</dbReference>
<protein>
    <recommendedName>
        <fullName evidence="1">ATP synthase subunit beta</fullName>
        <ecNumber evidence="1">7.1.2.2</ecNumber>
    </recommendedName>
    <alternativeName>
        <fullName evidence="1">ATP synthase F1 sector subunit beta</fullName>
    </alternativeName>
    <alternativeName>
        <fullName evidence="1">F-ATPase subunit beta</fullName>
    </alternativeName>
</protein>
<reference key="1">
    <citation type="submission" date="2006-12" db="EMBL/GenBank/DDBJ databases">
        <title>Complete sequence of chromosome 1 of Verminephrobacter eiseniae EF01-2.</title>
        <authorList>
            <person name="Copeland A."/>
            <person name="Lucas S."/>
            <person name="Lapidus A."/>
            <person name="Barry K."/>
            <person name="Detter J.C."/>
            <person name="Glavina del Rio T."/>
            <person name="Dalin E."/>
            <person name="Tice H."/>
            <person name="Pitluck S."/>
            <person name="Chertkov O."/>
            <person name="Brettin T."/>
            <person name="Bruce D."/>
            <person name="Han C."/>
            <person name="Tapia R."/>
            <person name="Gilna P."/>
            <person name="Schmutz J."/>
            <person name="Larimer F."/>
            <person name="Land M."/>
            <person name="Hauser L."/>
            <person name="Kyrpides N."/>
            <person name="Kim E."/>
            <person name="Stahl D."/>
            <person name="Richardson P."/>
        </authorList>
    </citation>
    <scope>NUCLEOTIDE SEQUENCE [LARGE SCALE GENOMIC DNA]</scope>
    <source>
        <strain>EF01-2</strain>
    </source>
</reference>
<sequence length="471" mass="50862">MAQAEAVQGKIVQCIGAVVDVEFPRDKMPKIYDALKFEGSALTLEVQQQLGDGVVRTIALGSSDGLRRGLIVTNTQAPITVPVGKATLGRIMDVLGAPIDERGPVDQTLTASIHRKAPAYDELSPSQDLLETGIKVIDLVCPFAKGGKVGLFGGAGVGKTVNMMELINNIAKAHSGLSVFAGVGERTREGNDFYHEMADSGVVNLEKLENSKVAMVYGQMNEPPGNRLRVALTGLTIAESFRDEGRDVLFFVDNIYRYTLAGTEVSALLGRMPSAVGYQPTLAEEMGRLQERITSTKVGSITSIQAVYVPADDLTDPSPATTFAHLDSTVVLSRDIASLGIYPAVDPLDSTSRQLDPNVVGQEHYNVARAVQGTLQRYKELRDIIAILGMDELAPEDKLAVARARKIQRFLSQPFHVAEVFTGSPGKYVPLSETIRGFKMIVNGEADHLPEQAFYMVGTIDEAFEKAKKVA</sequence>
<keyword id="KW-0066">ATP synthesis</keyword>
<keyword id="KW-0067">ATP-binding</keyword>
<keyword id="KW-0997">Cell inner membrane</keyword>
<keyword id="KW-1003">Cell membrane</keyword>
<keyword id="KW-0139">CF(1)</keyword>
<keyword id="KW-0375">Hydrogen ion transport</keyword>
<keyword id="KW-0406">Ion transport</keyword>
<keyword id="KW-0472">Membrane</keyword>
<keyword id="KW-0547">Nucleotide-binding</keyword>
<keyword id="KW-1185">Reference proteome</keyword>
<keyword id="KW-1278">Translocase</keyword>
<keyword id="KW-0813">Transport</keyword>
<comment type="function">
    <text evidence="1">Produces ATP from ADP in the presence of a proton gradient across the membrane. The catalytic sites are hosted primarily by the beta subunits.</text>
</comment>
<comment type="catalytic activity">
    <reaction evidence="1">
        <text>ATP + H2O + 4 H(+)(in) = ADP + phosphate + 5 H(+)(out)</text>
        <dbReference type="Rhea" id="RHEA:57720"/>
        <dbReference type="ChEBI" id="CHEBI:15377"/>
        <dbReference type="ChEBI" id="CHEBI:15378"/>
        <dbReference type="ChEBI" id="CHEBI:30616"/>
        <dbReference type="ChEBI" id="CHEBI:43474"/>
        <dbReference type="ChEBI" id="CHEBI:456216"/>
        <dbReference type="EC" id="7.1.2.2"/>
    </reaction>
</comment>
<comment type="subunit">
    <text evidence="1">F-type ATPases have 2 components, CF(1) - the catalytic core - and CF(0) - the membrane proton channel. CF(1) has five subunits: alpha(3), beta(3), gamma(1), delta(1), epsilon(1). CF(0) has three main subunits: a(1), b(2) and c(9-12). The alpha and beta chains form an alternating ring which encloses part of the gamma chain. CF(1) is attached to CF(0) by a central stalk formed by the gamma and epsilon chains, while a peripheral stalk is formed by the delta and b chains.</text>
</comment>
<comment type="subcellular location">
    <subcellularLocation>
        <location evidence="1">Cell inner membrane</location>
        <topology evidence="1">Peripheral membrane protein</topology>
    </subcellularLocation>
</comment>
<comment type="similarity">
    <text evidence="1">Belongs to the ATPase alpha/beta chains family.</text>
</comment>
<feature type="chain" id="PRO_0000339598" description="ATP synthase subunit beta">
    <location>
        <begin position="1"/>
        <end position="471"/>
    </location>
</feature>
<feature type="binding site" evidence="1">
    <location>
        <begin position="153"/>
        <end position="160"/>
    </location>
    <ligand>
        <name>ATP</name>
        <dbReference type="ChEBI" id="CHEBI:30616"/>
    </ligand>
</feature>
<accession>A1WF58</accession>
<evidence type="ECO:0000255" key="1">
    <source>
        <dbReference type="HAMAP-Rule" id="MF_01347"/>
    </source>
</evidence>
<proteinExistence type="inferred from homology"/>
<gene>
    <name evidence="1" type="primary">atpD</name>
    <name type="ordered locus">Veis_0480</name>
</gene>
<name>ATPB_VEREI</name>